<reference key="1">
    <citation type="journal article" date="1987" name="FEBS Lett.">
        <title>The amino acid sequence of the aliphatic amidase from Pseudomonas aeruginosa.</title>
        <authorList>
            <person name="Ambler R.P."/>
            <person name="Auffret A.D."/>
            <person name="Clarke P.H."/>
        </authorList>
    </citation>
    <scope>PROTEIN SEQUENCE</scope>
    <source>
        <strain>PAC142</strain>
    </source>
</reference>
<reference key="2">
    <citation type="journal article" date="1987" name="FEBS Lett.">
        <title>The nucleotide sequence of the amiE gene of Pseudomonas aeruginosa.</title>
        <authorList>
            <person name="Brammar W.J."/>
            <person name="Charles I.G."/>
            <person name="Matfield M."/>
            <person name="Liu C.-P."/>
            <person name="Drew R.E."/>
            <person name="Clarke P.H."/>
        </authorList>
    </citation>
    <scope>NUCLEOTIDE SEQUENCE [GENOMIC DNA]</scope>
</reference>
<reference key="3">
    <citation type="journal article" date="2000" name="Nature">
        <title>Complete genome sequence of Pseudomonas aeruginosa PAO1, an opportunistic pathogen.</title>
        <authorList>
            <person name="Stover C.K."/>
            <person name="Pham X.-Q.T."/>
            <person name="Erwin A.L."/>
            <person name="Mizoguchi S.D."/>
            <person name="Warrener P."/>
            <person name="Hickey M.J."/>
            <person name="Brinkman F.S.L."/>
            <person name="Hufnagle W.O."/>
            <person name="Kowalik D.J."/>
            <person name="Lagrou M."/>
            <person name="Garber R.L."/>
            <person name="Goltry L."/>
            <person name="Tolentino E."/>
            <person name="Westbrock-Wadman S."/>
            <person name="Yuan Y."/>
            <person name="Brody L.L."/>
            <person name="Coulter S.N."/>
            <person name="Folger K.R."/>
            <person name="Kas A."/>
            <person name="Larbig K."/>
            <person name="Lim R.M."/>
            <person name="Smith K.A."/>
            <person name="Spencer D.H."/>
            <person name="Wong G.K.-S."/>
            <person name="Wu Z."/>
            <person name="Paulsen I.T."/>
            <person name="Reizer J."/>
            <person name="Saier M.H. Jr."/>
            <person name="Hancock R.E.W."/>
            <person name="Lory S."/>
            <person name="Olson M.V."/>
        </authorList>
    </citation>
    <scope>NUCLEOTIDE SEQUENCE [LARGE SCALE GENOMIC DNA]</scope>
    <source>
        <strain>ATCC 15692 / DSM 22644 / CIP 104116 / JCM 14847 / LMG 12228 / 1C / PRS 101 / PAO1</strain>
    </source>
</reference>
<reference key="4">
    <citation type="journal article" date="1995" name="J. Bacteriol.">
        <title>Transcriptional analysis of the amidase operon from Pseudomonas aeruginosa.</title>
        <authorList>
            <person name="Wilson S.A."/>
            <person name="Drew R.E."/>
        </authorList>
    </citation>
    <scope>NUCLEOTIDE SEQUENCE [GENOMIC DNA] OF 336-346</scope>
</reference>
<reference key="5">
    <citation type="journal article" date="1999" name="Biochem. J.">
        <title>Evidence that cysteine-166 is the active-site nucleophile of Pseudomonas aeruginosa amidase: crystallization and preliminary X-ray diffraction analysis of the enzyme.</title>
        <authorList>
            <person name="Farnaud S."/>
            <person name="Tata R."/>
            <person name="Sohi M.K."/>
            <person name="Wan T."/>
            <person name="Brown P.R."/>
            <person name="Sutton B.J."/>
        </authorList>
    </citation>
    <scope>SUBUNIT</scope>
    <scope>MUTAGENESIS OF CYS-166</scope>
</reference>
<reference key="6">
    <citation type="journal article" date="2002" name="Biochem. J.">
        <title>Support for a three-dimensional structure predicting a Cys-Glu-Lys catalytic triad for Pseudomonas aeruginosa amidase comes from site-directed mutagenesis and mutations altering substrate specificity.</title>
        <authorList>
            <person name="Novo C."/>
            <person name="Farnaud S."/>
            <person name="Tata R."/>
            <person name="Clemente A."/>
            <person name="Brown P.R."/>
        </authorList>
    </citation>
    <scope>MUTAGENESIS OF GLU-59 AND LYS-134</scope>
    <scope>3D-STRUCTURE MODELING OF 20-290</scope>
</reference>
<accession>P11436</accession>
<sequence>MRHGDISSSNDTVGVAVVNYKMPRLHTAAEVLDNARKIAEMIVGMKQGLPGMDLVVFPEYSLQGIMYDPAEMMETAVAIPGEETEIFSRACRKANVWGVFSLTGERHEEHPRKAPYNTLVLIDNNGEIVQKYRKIIPWCPIEGWYPGGQTYVSEGPKGMKISLIICDDGNYPEIWRDCAMKGAELIVRCQGYMYPAKDQQVMMAKAMAWANNCYVAVANAAGFDGVYSYFGHSAIIGFDGRTLGECGEEEMGIQYAQLSLSQIRDARANDQSQNHLFKILHRGYSGLQASGDGDRGLAECPFEFYRTWVTDAEKARENVERLTRSTTGVAQCPVGRLPYEGLEKEA</sequence>
<gene>
    <name type="primary">amiE</name>
    <name type="ordered locus">PA3366</name>
</gene>
<dbReference type="EC" id="3.5.1.4"/>
<dbReference type="EMBL" id="M27612">
    <property type="protein sequence ID" value="AAA25697.1"/>
    <property type="molecule type" value="Genomic_DNA"/>
</dbReference>
<dbReference type="EMBL" id="AE004091">
    <property type="protein sequence ID" value="AAG06754.1"/>
    <property type="molecule type" value="Genomic_DNA"/>
</dbReference>
<dbReference type="PIR" id="A26741">
    <property type="entry name" value="A26741"/>
</dbReference>
<dbReference type="PIR" id="H83222">
    <property type="entry name" value="H83222"/>
</dbReference>
<dbReference type="RefSeq" id="NP_252056.1">
    <property type="nucleotide sequence ID" value="NC_002516.2"/>
</dbReference>
<dbReference type="RefSeq" id="WP_003113129.1">
    <property type="nucleotide sequence ID" value="NZ_QZGE01000017.1"/>
</dbReference>
<dbReference type="PDB" id="2UXY">
    <property type="method" value="X-ray"/>
    <property type="resolution" value="1.25 A"/>
    <property type="chains" value="A=1-341"/>
</dbReference>
<dbReference type="PDBsum" id="2UXY"/>
<dbReference type="SMR" id="P11436"/>
<dbReference type="STRING" id="208964.PA3366"/>
<dbReference type="PaxDb" id="208964-PA3366"/>
<dbReference type="DNASU" id="877816"/>
<dbReference type="GeneID" id="877816"/>
<dbReference type="KEGG" id="pae:PA3366"/>
<dbReference type="PATRIC" id="fig|208964.12.peg.3525"/>
<dbReference type="PseudoCAP" id="PA3366"/>
<dbReference type="HOGENOM" id="CLU_071797_0_0_6"/>
<dbReference type="InParanoid" id="P11436"/>
<dbReference type="OrthoDB" id="9803803at2"/>
<dbReference type="PhylomeDB" id="P11436"/>
<dbReference type="BioCyc" id="PAER208964:G1FZ6-3430-MONOMER"/>
<dbReference type="BRENDA" id="3.5.1.4">
    <property type="organism ID" value="5087"/>
</dbReference>
<dbReference type="SABIO-RK" id="P11436"/>
<dbReference type="EvolutionaryTrace" id="P11436"/>
<dbReference type="Proteomes" id="UP000002438">
    <property type="component" value="Chromosome"/>
</dbReference>
<dbReference type="GO" id="GO:0004040">
    <property type="term" value="F:amidase activity"/>
    <property type="evidence" value="ECO:0007669"/>
    <property type="project" value="UniProtKB-UniRule"/>
</dbReference>
<dbReference type="GO" id="GO:0016811">
    <property type="term" value="F:hydrolase activity, acting on carbon-nitrogen (but not peptide) bonds, in linear amides"/>
    <property type="evidence" value="ECO:0000318"/>
    <property type="project" value="GO_Central"/>
</dbReference>
<dbReference type="GO" id="GO:0043605">
    <property type="term" value="P:amide catabolic process"/>
    <property type="evidence" value="ECO:0000314"/>
    <property type="project" value="PseudoCAP"/>
</dbReference>
<dbReference type="GO" id="GO:0015976">
    <property type="term" value="P:carbon utilization"/>
    <property type="evidence" value="ECO:0000314"/>
    <property type="project" value="PseudoCAP"/>
</dbReference>
<dbReference type="CDD" id="cd07565">
    <property type="entry name" value="aliphatic_amidase"/>
    <property type="match status" value="1"/>
</dbReference>
<dbReference type="FunFam" id="3.60.110.10:FF:000014">
    <property type="entry name" value="Aliphatic amidase"/>
    <property type="match status" value="1"/>
</dbReference>
<dbReference type="Gene3D" id="3.60.110.10">
    <property type="entry name" value="Carbon-nitrogen hydrolase"/>
    <property type="match status" value="1"/>
</dbReference>
<dbReference type="HAMAP" id="MF_01242">
    <property type="entry name" value="Aliphatic_amidase"/>
    <property type="match status" value="1"/>
</dbReference>
<dbReference type="InterPro" id="IPR050345">
    <property type="entry name" value="Aliph_Amidase/BUP"/>
</dbReference>
<dbReference type="InterPro" id="IPR023719">
    <property type="entry name" value="Aliphatic_amidase"/>
</dbReference>
<dbReference type="InterPro" id="IPR003010">
    <property type="entry name" value="C-N_Hydrolase"/>
</dbReference>
<dbReference type="InterPro" id="IPR036526">
    <property type="entry name" value="C-N_Hydrolase_sf"/>
</dbReference>
<dbReference type="NCBIfam" id="NF009802">
    <property type="entry name" value="PRK13286.1"/>
    <property type="match status" value="1"/>
</dbReference>
<dbReference type="PANTHER" id="PTHR43674:SF14">
    <property type="entry name" value="ALIPHATIC AMIDASE"/>
    <property type="match status" value="1"/>
</dbReference>
<dbReference type="PANTHER" id="PTHR43674">
    <property type="entry name" value="NITRILASE C965.09-RELATED"/>
    <property type="match status" value="1"/>
</dbReference>
<dbReference type="Pfam" id="PF00795">
    <property type="entry name" value="CN_hydrolase"/>
    <property type="match status" value="1"/>
</dbReference>
<dbReference type="SUPFAM" id="SSF56317">
    <property type="entry name" value="Carbon-nitrogen hydrolase"/>
    <property type="match status" value="1"/>
</dbReference>
<dbReference type="PROSITE" id="PS50263">
    <property type="entry name" value="CN_HYDROLASE"/>
    <property type="match status" value="1"/>
</dbReference>
<evidence type="ECO:0000250" key="1"/>
<evidence type="ECO:0000255" key="2">
    <source>
        <dbReference type="PROSITE-ProRule" id="PRU00054"/>
    </source>
</evidence>
<evidence type="ECO:0000269" key="3">
    <source>
    </source>
</evidence>
<evidence type="ECO:0000269" key="4">
    <source>
    </source>
</evidence>
<evidence type="ECO:0000305" key="5"/>
<evidence type="ECO:0007829" key="6">
    <source>
        <dbReference type="PDB" id="2UXY"/>
    </source>
</evidence>
<organism>
    <name type="scientific">Pseudomonas aeruginosa (strain ATCC 15692 / DSM 22644 / CIP 104116 / JCM 14847 / LMG 12228 / 1C / PRS 101 / PAO1)</name>
    <dbReference type="NCBI Taxonomy" id="208964"/>
    <lineage>
        <taxon>Bacteria</taxon>
        <taxon>Pseudomonadati</taxon>
        <taxon>Pseudomonadota</taxon>
        <taxon>Gammaproteobacteria</taxon>
        <taxon>Pseudomonadales</taxon>
        <taxon>Pseudomonadaceae</taxon>
        <taxon>Pseudomonas</taxon>
    </lineage>
</organism>
<feature type="chain" id="PRO_0000204060" description="Aliphatic amidase">
    <location>
        <begin position="1"/>
        <end position="346"/>
    </location>
</feature>
<feature type="domain" description="CN hydrolase" evidence="2">
    <location>
        <begin position="13"/>
        <end position="260"/>
    </location>
</feature>
<feature type="active site" description="Proton acceptor" evidence="1">
    <location>
        <position position="59"/>
    </location>
</feature>
<feature type="active site" description="Proton donor" evidence="1">
    <location>
        <position position="134"/>
    </location>
</feature>
<feature type="active site" description="Nucleophile" evidence="1">
    <location>
        <position position="166"/>
    </location>
</feature>
<feature type="mutagenesis site" description="Loss of activity." evidence="4">
    <original>E</original>
    <variation>Q</variation>
    <variation>D</variation>
    <location>
        <position position="59"/>
    </location>
</feature>
<feature type="mutagenesis site" description="Loss of activity." evidence="4">
    <original>K</original>
    <variation>N</variation>
    <location>
        <position position="134"/>
    </location>
</feature>
<feature type="mutagenesis site" description="200-fold reduction in activity." evidence="4">
    <original>K</original>
    <variation>R</variation>
    <location>
        <position position="134"/>
    </location>
</feature>
<feature type="mutagenesis site" description="Loss of activity." evidence="3">
    <original>C</original>
    <variation>S</variation>
    <variation>A</variation>
    <location>
        <position position="166"/>
    </location>
</feature>
<feature type="sequence conflict" description="In Ref. 1; AA sequence." evidence="5" ref="1">
    <original>E</original>
    <variation>D</variation>
    <location>
        <position position="40"/>
    </location>
</feature>
<feature type="sequence conflict" description="In Ref. 2; AAA25697." evidence="5" ref="2">
    <original>G</original>
    <variation>P</variation>
    <location>
        <position position="169"/>
    </location>
</feature>
<feature type="sequence conflict" description="In Ref. 1; AA sequence." evidence="5" ref="1">
    <original>E</original>
    <variation>D</variation>
    <location>
        <position position="317"/>
    </location>
</feature>
<feature type="strand" evidence="6">
    <location>
        <begin position="12"/>
        <end position="18"/>
    </location>
</feature>
<feature type="helix" evidence="6">
    <location>
        <begin position="28"/>
        <end position="48"/>
    </location>
</feature>
<feature type="strand" evidence="6">
    <location>
        <begin position="52"/>
        <end position="56"/>
    </location>
</feature>
<feature type="turn" evidence="6">
    <location>
        <begin position="59"/>
        <end position="63"/>
    </location>
</feature>
<feature type="helix" evidence="6">
    <location>
        <begin position="69"/>
        <end position="75"/>
    </location>
</feature>
<feature type="strand" evidence="6">
    <location>
        <begin position="79"/>
        <end position="81"/>
    </location>
</feature>
<feature type="helix" evidence="6">
    <location>
        <begin position="82"/>
        <end position="94"/>
    </location>
</feature>
<feature type="strand" evidence="6">
    <location>
        <begin position="97"/>
        <end position="105"/>
    </location>
</feature>
<feature type="turn" evidence="6">
    <location>
        <begin position="108"/>
        <end position="111"/>
    </location>
</feature>
<feature type="strand" evidence="6">
    <location>
        <begin position="116"/>
        <end position="122"/>
    </location>
</feature>
<feature type="strand" evidence="6">
    <location>
        <begin position="128"/>
        <end position="133"/>
    </location>
</feature>
<feature type="turn" evidence="6">
    <location>
        <begin position="139"/>
        <end position="141"/>
    </location>
</feature>
<feature type="helix" evidence="6">
    <location>
        <begin position="156"/>
        <end position="158"/>
    </location>
</feature>
<feature type="strand" evidence="6">
    <location>
        <begin position="160"/>
        <end position="165"/>
    </location>
</feature>
<feature type="helix" evidence="6">
    <location>
        <begin position="166"/>
        <end position="170"/>
    </location>
</feature>
<feature type="helix" evidence="6">
    <location>
        <begin position="172"/>
        <end position="180"/>
    </location>
</feature>
<feature type="strand" evidence="6">
    <location>
        <begin position="184"/>
        <end position="190"/>
    </location>
</feature>
<feature type="helix" evidence="6">
    <location>
        <begin position="197"/>
        <end position="211"/>
    </location>
</feature>
<feature type="strand" evidence="6">
    <location>
        <begin position="214"/>
        <end position="219"/>
    </location>
</feature>
<feature type="strand" evidence="6">
    <location>
        <begin position="221"/>
        <end position="223"/>
    </location>
</feature>
<feature type="strand" evidence="6">
    <location>
        <begin position="228"/>
        <end position="230"/>
    </location>
</feature>
<feature type="strand" evidence="6">
    <location>
        <begin position="234"/>
        <end position="236"/>
    </location>
</feature>
<feature type="strand" evidence="6">
    <location>
        <begin position="242"/>
        <end position="245"/>
    </location>
</feature>
<feature type="strand" evidence="6">
    <location>
        <begin position="253"/>
        <end position="259"/>
    </location>
</feature>
<feature type="helix" evidence="6">
    <location>
        <begin position="260"/>
        <end position="269"/>
    </location>
</feature>
<feature type="helix" evidence="6">
    <location>
        <begin position="275"/>
        <end position="278"/>
    </location>
</feature>
<feature type="helix" evidence="6">
    <location>
        <begin position="284"/>
        <end position="289"/>
    </location>
</feature>
<feature type="helix" evidence="6">
    <location>
        <begin position="303"/>
        <end position="310"/>
    </location>
</feature>
<feature type="helix" evidence="6">
    <location>
        <begin position="312"/>
        <end position="322"/>
    </location>
</feature>
<feature type="strand" evidence="6">
    <location>
        <begin position="325"/>
        <end position="328"/>
    </location>
</feature>
<comment type="function">
    <text>Catalyzes the hydrolysis of short-chain aliphatic amides to their corresponding organic acids with release of ammonia. Enables the organism to use acetamide as both carbon and nitrogen source.</text>
</comment>
<comment type="function">
    <text evidence="1">Also exhibits in vitro acyl transferase activity, transferring the acyl moiety of short-chain amides to hydroxylamine to form hydroxamates.</text>
</comment>
<comment type="catalytic activity">
    <reaction>
        <text>a monocarboxylic acid amide + H2O = a monocarboxylate + NH4(+)</text>
        <dbReference type="Rhea" id="RHEA:12020"/>
        <dbReference type="ChEBI" id="CHEBI:15377"/>
        <dbReference type="ChEBI" id="CHEBI:28938"/>
        <dbReference type="ChEBI" id="CHEBI:35757"/>
        <dbReference type="ChEBI" id="CHEBI:83628"/>
        <dbReference type="EC" id="3.5.1.4"/>
    </reaction>
</comment>
<comment type="subunit">
    <text evidence="3">Homohexamer.</text>
</comment>
<comment type="similarity">
    <text evidence="5">Belongs to the carbon-nitrogen hydrolase superfamily. Aliphatic amidase family.</text>
</comment>
<keyword id="KW-0002">3D-structure</keyword>
<keyword id="KW-0903">Direct protein sequencing</keyword>
<keyword id="KW-0378">Hydrolase</keyword>
<keyword id="KW-1185">Reference proteome</keyword>
<protein>
    <recommendedName>
        <fullName>Aliphatic amidase</fullName>
        <ecNumber>3.5.1.4</ecNumber>
    </recommendedName>
    <alternativeName>
        <fullName>Acylamide amidohydrolase</fullName>
    </alternativeName>
</protein>
<name>AMIE_PSEAE</name>
<proteinExistence type="evidence at protein level"/>